<protein>
    <recommendedName>
        <fullName evidence="1">N-acetyl-gamma-glutamyl-phosphate reductase</fullName>
        <shortName evidence="1">AGPR</shortName>
        <ecNumber evidence="1">1.2.1.38</ecNumber>
    </recommendedName>
    <alternativeName>
        <fullName evidence="1">N-acetyl-glutamate semialdehyde dehydrogenase</fullName>
        <shortName evidence="1">NAGSA dehydrogenase</shortName>
    </alternativeName>
</protein>
<sequence>MIEVGIVGGSGYGAIELIRLLIQHPNVNIKYIFSHSKQDQPIKETFPHLEQLTYHYETLNSEGIECDVIFFATPSNVSKHIVPQLLSKRIKIIDLSGDFRLTNRATYETYYGETAASQEYLNEANYSIAEWSNVNAQTTQLIANPGCFPTATLLALHPLIDKDIVKQDNIIIDAKTGVSGAGRSLAQHVHFAEMNENLSAYAIGKHKHKPEIEQYLSLLAQQEVKVTFTPHLVPMTRGILSTIYIKLNHAFTNEDLHNLFKDYYEDKPFVRIRSLGQFPKTKEVYGSNYCDIGIYVDEENQTAILVSVIDNLVKGASGQAIQNLNLMYGWKENTGLLQSPVYP</sequence>
<keyword id="KW-0028">Amino-acid biosynthesis</keyword>
<keyword id="KW-0055">Arginine biosynthesis</keyword>
<keyword id="KW-0963">Cytoplasm</keyword>
<keyword id="KW-0521">NADP</keyword>
<keyword id="KW-0560">Oxidoreductase</keyword>
<keyword id="KW-1185">Reference proteome</keyword>
<evidence type="ECO:0000255" key="1">
    <source>
        <dbReference type="HAMAP-Rule" id="MF_00150"/>
    </source>
</evidence>
<reference key="1">
    <citation type="journal article" date="2005" name="Proc. Natl. Acad. Sci. U.S.A.">
        <title>Whole genome sequence of Staphylococcus saprophyticus reveals the pathogenesis of uncomplicated urinary tract infection.</title>
        <authorList>
            <person name="Kuroda M."/>
            <person name="Yamashita A."/>
            <person name="Hirakawa H."/>
            <person name="Kumano M."/>
            <person name="Morikawa K."/>
            <person name="Higashide M."/>
            <person name="Maruyama A."/>
            <person name="Inose Y."/>
            <person name="Matoba K."/>
            <person name="Toh H."/>
            <person name="Kuhara S."/>
            <person name="Hattori M."/>
            <person name="Ohta T."/>
        </authorList>
    </citation>
    <scope>NUCLEOTIDE SEQUENCE [LARGE SCALE GENOMIC DNA]</scope>
    <source>
        <strain>ATCC 15305 / DSM 20229 / NCIMB 8711 / NCTC 7292 / S-41</strain>
    </source>
</reference>
<feature type="chain" id="PRO_1000011068" description="N-acetyl-gamma-glutamyl-phosphate reductase">
    <location>
        <begin position="1"/>
        <end position="343"/>
    </location>
</feature>
<feature type="active site" evidence="1">
    <location>
        <position position="147"/>
    </location>
</feature>
<dbReference type="EC" id="1.2.1.38" evidence="1"/>
<dbReference type="EMBL" id="AP008934">
    <property type="protein sequence ID" value="BAE17366.1"/>
    <property type="molecule type" value="Genomic_DNA"/>
</dbReference>
<dbReference type="RefSeq" id="WP_002482167.1">
    <property type="nucleotide sequence ID" value="NZ_MTGA01000037.1"/>
</dbReference>
<dbReference type="SMR" id="Q4A0N1"/>
<dbReference type="GeneID" id="66866381"/>
<dbReference type="KEGG" id="ssp:SSP0221"/>
<dbReference type="PATRIC" id="fig|342451.11.peg.226"/>
<dbReference type="eggNOG" id="COG0002">
    <property type="taxonomic scope" value="Bacteria"/>
</dbReference>
<dbReference type="HOGENOM" id="CLU_006384_0_1_9"/>
<dbReference type="OrthoDB" id="9801289at2"/>
<dbReference type="UniPathway" id="UPA00068">
    <property type="reaction ID" value="UER00108"/>
</dbReference>
<dbReference type="Proteomes" id="UP000006371">
    <property type="component" value="Chromosome"/>
</dbReference>
<dbReference type="GO" id="GO:0005737">
    <property type="term" value="C:cytoplasm"/>
    <property type="evidence" value="ECO:0007669"/>
    <property type="project" value="UniProtKB-SubCell"/>
</dbReference>
<dbReference type="GO" id="GO:0003942">
    <property type="term" value="F:N-acetyl-gamma-glutamyl-phosphate reductase activity"/>
    <property type="evidence" value="ECO:0007669"/>
    <property type="project" value="UniProtKB-UniRule"/>
</dbReference>
<dbReference type="GO" id="GO:0051287">
    <property type="term" value="F:NAD binding"/>
    <property type="evidence" value="ECO:0007669"/>
    <property type="project" value="InterPro"/>
</dbReference>
<dbReference type="GO" id="GO:0070401">
    <property type="term" value="F:NADP+ binding"/>
    <property type="evidence" value="ECO:0007669"/>
    <property type="project" value="InterPro"/>
</dbReference>
<dbReference type="GO" id="GO:0006526">
    <property type="term" value="P:L-arginine biosynthetic process"/>
    <property type="evidence" value="ECO:0007669"/>
    <property type="project" value="UniProtKB-UniRule"/>
</dbReference>
<dbReference type="CDD" id="cd23934">
    <property type="entry name" value="AGPR_1_C"/>
    <property type="match status" value="1"/>
</dbReference>
<dbReference type="CDD" id="cd17895">
    <property type="entry name" value="AGPR_1_N"/>
    <property type="match status" value="1"/>
</dbReference>
<dbReference type="FunFam" id="3.30.360.10:FF:000014">
    <property type="entry name" value="N-acetyl-gamma-glutamyl-phosphate reductase"/>
    <property type="match status" value="1"/>
</dbReference>
<dbReference type="Gene3D" id="3.30.360.10">
    <property type="entry name" value="Dihydrodipicolinate Reductase, domain 2"/>
    <property type="match status" value="1"/>
</dbReference>
<dbReference type="Gene3D" id="3.40.50.720">
    <property type="entry name" value="NAD(P)-binding Rossmann-like Domain"/>
    <property type="match status" value="1"/>
</dbReference>
<dbReference type="HAMAP" id="MF_00150">
    <property type="entry name" value="ArgC_type1"/>
    <property type="match status" value="1"/>
</dbReference>
<dbReference type="InterPro" id="IPR023013">
    <property type="entry name" value="AGPR_AS"/>
</dbReference>
<dbReference type="InterPro" id="IPR000706">
    <property type="entry name" value="AGPR_type-1"/>
</dbReference>
<dbReference type="InterPro" id="IPR036291">
    <property type="entry name" value="NAD(P)-bd_dom_sf"/>
</dbReference>
<dbReference type="InterPro" id="IPR050085">
    <property type="entry name" value="NAGSA_dehydrogenase"/>
</dbReference>
<dbReference type="InterPro" id="IPR000534">
    <property type="entry name" value="Semialdehyde_DH_NAD-bd"/>
</dbReference>
<dbReference type="NCBIfam" id="TIGR01850">
    <property type="entry name" value="argC"/>
    <property type="match status" value="1"/>
</dbReference>
<dbReference type="PANTHER" id="PTHR32338:SF10">
    <property type="entry name" value="N-ACETYL-GAMMA-GLUTAMYL-PHOSPHATE REDUCTASE, CHLOROPLASTIC-RELATED"/>
    <property type="match status" value="1"/>
</dbReference>
<dbReference type="PANTHER" id="PTHR32338">
    <property type="entry name" value="N-ACETYL-GAMMA-GLUTAMYL-PHOSPHATE REDUCTASE, CHLOROPLASTIC-RELATED-RELATED"/>
    <property type="match status" value="1"/>
</dbReference>
<dbReference type="Pfam" id="PF01118">
    <property type="entry name" value="Semialdhyde_dh"/>
    <property type="match status" value="1"/>
</dbReference>
<dbReference type="Pfam" id="PF22698">
    <property type="entry name" value="Semialdhyde_dhC_1"/>
    <property type="match status" value="1"/>
</dbReference>
<dbReference type="SMART" id="SM00859">
    <property type="entry name" value="Semialdhyde_dh"/>
    <property type="match status" value="1"/>
</dbReference>
<dbReference type="SUPFAM" id="SSF55347">
    <property type="entry name" value="Glyceraldehyde-3-phosphate dehydrogenase-like, C-terminal domain"/>
    <property type="match status" value="1"/>
</dbReference>
<dbReference type="SUPFAM" id="SSF51735">
    <property type="entry name" value="NAD(P)-binding Rossmann-fold domains"/>
    <property type="match status" value="1"/>
</dbReference>
<dbReference type="PROSITE" id="PS01224">
    <property type="entry name" value="ARGC"/>
    <property type="match status" value="1"/>
</dbReference>
<accession>Q4A0N1</accession>
<proteinExistence type="inferred from homology"/>
<organism>
    <name type="scientific">Staphylococcus saprophyticus subsp. saprophyticus (strain ATCC 15305 / DSM 20229 / NCIMB 8711 / NCTC 7292 / S-41)</name>
    <dbReference type="NCBI Taxonomy" id="342451"/>
    <lineage>
        <taxon>Bacteria</taxon>
        <taxon>Bacillati</taxon>
        <taxon>Bacillota</taxon>
        <taxon>Bacilli</taxon>
        <taxon>Bacillales</taxon>
        <taxon>Staphylococcaceae</taxon>
        <taxon>Staphylococcus</taxon>
    </lineage>
</organism>
<name>ARGC_STAS1</name>
<comment type="function">
    <text evidence="1">Catalyzes the NADPH-dependent reduction of N-acetyl-5-glutamyl phosphate to yield N-acetyl-L-glutamate 5-semialdehyde.</text>
</comment>
<comment type="catalytic activity">
    <reaction evidence="1">
        <text>N-acetyl-L-glutamate 5-semialdehyde + phosphate + NADP(+) = N-acetyl-L-glutamyl 5-phosphate + NADPH + H(+)</text>
        <dbReference type="Rhea" id="RHEA:21588"/>
        <dbReference type="ChEBI" id="CHEBI:15378"/>
        <dbReference type="ChEBI" id="CHEBI:29123"/>
        <dbReference type="ChEBI" id="CHEBI:43474"/>
        <dbReference type="ChEBI" id="CHEBI:57783"/>
        <dbReference type="ChEBI" id="CHEBI:57936"/>
        <dbReference type="ChEBI" id="CHEBI:58349"/>
        <dbReference type="EC" id="1.2.1.38"/>
    </reaction>
</comment>
<comment type="pathway">
    <text evidence="1">Amino-acid biosynthesis; L-arginine biosynthesis; N(2)-acetyl-L-ornithine from L-glutamate: step 3/4.</text>
</comment>
<comment type="subcellular location">
    <subcellularLocation>
        <location evidence="1">Cytoplasm</location>
    </subcellularLocation>
</comment>
<comment type="similarity">
    <text evidence="1">Belongs to the NAGSA dehydrogenase family. Type 1 subfamily.</text>
</comment>
<gene>
    <name evidence="1" type="primary">argC</name>
    <name type="ordered locus">SSP0221</name>
</gene>